<gene>
    <name evidence="1" type="primary">rpsB</name>
    <name type="ordered locus">Dred_1978</name>
</gene>
<sequence>MAVISMKQLLEAGVHFGHQTRRWNPKMAPYIFTDRNGIYIIDLQKTVKKVEECYDFVKQLAGEGGTLLFVGTKKQAQEAVKEEAERCGMFFVNQRWLGGMLTNFQTIRNRIDRLHELERMEEDGTFEVLPKKEVAQLLHEKEKLDKFLGGIKNMRRLPGALFVIDPRKERIAVAEARKLGIPIVAIVDTNCDPDEIDYVIPGNDDAIRAVKLLTGKIADAILEGKQGEQVAE</sequence>
<name>RS2_DESRM</name>
<dbReference type="EMBL" id="CP000612">
    <property type="protein sequence ID" value="ABO50496.1"/>
    <property type="molecule type" value="Genomic_DNA"/>
</dbReference>
<dbReference type="RefSeq" id="WP_011878306.1">
    <property type="nucleotide sequence ID" value="NC_009253.1"/>
</dbReference>
<dbReference type="SMR" id="A4J5Z3"/>
<dbReference type="STRING" id="349161.Dred_1978"/>
<dbReference type="KEGG" id="drm:Dred_1978"/>
<dbReference type="eggNOG" id="COG0052">
    <property type="taxonomic scope" value="Bacteria"/>
</dbReference>
<dbReference type="HOGENOM" id="CLU_040318_1_2_9"/>
<dbReference type="OrthoDB" id="9808036at2"/>
<dbReference type="Proteomes" id="UP000001556">
    <property type="component" value="Chromosome"/>
</dbReference>
<dbReference type="GO" id="GO:0022627">
    <property type="term" value="C:cytosolic small ribosomal subunit"/>
    <property type="evidence" value="ECO:0007669"/>
    <property type="project" value="TreeGrafter"/>
</dbReference>
<dbReference type="GO" id="GO:0003735">
    <property type="term" value="F:structural constituent of ribosome"/>
    <property type="evidence" value="ECO:0007669"/>
    <property type="project" value="InterPro"/>
</dbReference>
<dbReference type="GO" id="GO:0006412">
    <property type="term" value="P:translation"/>
    <property type="evidence" value="ECO:0007669"/>
    <property type="project" value="UniProtKB-UniRule"/>
</dbReference>
<dbReference type="CDD" id="cd01425">
    <property type="entry name" value="RPS2"/>
    <property type="match status" value="1"/>
</dbReference>
<dbReference type="FunFam" id="1.10.287.610:FF:000001">
    <property type="entry name" value="30S ribosomal protein S2"/>
    <property type="match status" value="1"/>
</dbReference>
<dbReference type="Gene3D" id="3.40.50.10490">
    <property type="entry name" value="Glucose-6-phosphate isomerase like protein, domain 1"/>
    <property type="match status" value="1"/>
</dbReference>
<dbReference type="Gene3D" id="1.10.287.610">
    <property type="entry name" value="Helix hairpin bin"/>
    <property type="match status" value="1"/>
</dbReference>
<dbReference type="HAMAP" id="MF_00291_B">
    <property type="entry name" value="Ribosomal_uS2_B"/>
    <property type="match status" value="1"/>
</dbReference>
<dbReference type="InterPro" id="IPR001865">
    <property type="entry name" value="Ribosomal_uS2"/>
</dbReference>
<dbReference type="InterPro" id="IPR005706">
    <property type="entry name" value="Ribosomal_uS2_bac/mit/plastid"/>
</dbReference>
<dbReference type="InterPro" id="IPR018130">
    <property type="entry name" value="Ribosomal_uS2_CS"/>
</dbReference>
<dbReference type="InterPro" id="IPR023591">
    <property type="entry name" value="Ribosomal_uS2_flav_dom_sf"/>
</dbReference>
<dbReference type="NCBIfam" id="TIGR01011">
    <property type="entry name" value="rpsB_bact"/>
    <property type="match status" value="1"/>
</dbReference>
<dbReference type="PANTHER" id="PTHR12534">
    <property type="entry name" value="30S RIBOSOMAL PROTEIN S2 PROKARYOTIC AND ORGANELLAR"/>
    <property type="match status" value="1"/>
</dbReference>
<dbReference type="PANTHER" id="PTHR12534:SF0">
    <property type="entry name" value="SMALL RIBOSOMAL SUBUNIT PROTEIN US2M"/>
    <property type="match status" value="1"/>
</dbReference>
<dbReference type="Pfam" id="PF00318">
    <property type="entry name" value="Ribosomal_S2"/>
    <property type="match status" value="1"/>
</dbReference>
<dbReference type="PRINTS" id="PR00395">
    <property type="entry name" value="RIBOSOMALS2"/>
</dbReference>
<dbReference type="SUPFAM" id="SSF52313">
    <property type="entry name" value="Ribosomal protein S2"/>
    <property type="match status" value="1"/>
</dbReference>
<dbReference type="PROSITE" id="PS00962">
    <property type="entry name" value="RIBOSOMAL_S2_1"/>
    <property type="match status" value="1"/>
</dbReference>
<dbReference type="PROSITE" id="PS00963">
    <property type="entry name" value="RIBOSOMAL_S2_2"/>
    <property type="match status" value="1"/>
</dbReference>
<accession>A4J5Z3</accession>
<feature type="chain" id="PRO_1000071946" description="Small ribosomal subunit protein uS2">
    <location>
        <begin position="1"/>
        <end position="232"/>
    </location>
</feature>
<comment type="similarity">
    <text evidence="1">Belongs to the universal ribosomal protein uS2 family.</text>
</comment>
<reference key="1">
    <citation type="submission" date="2007-03" db="EMBL/GenBank/DDBJ databases">
        <title>Complete sequence of Desulfotomaculum reducens MI-1.</title>
        <authorList>
            <consortium name="US DOE Joint Genome Institute"/>
            <person name="Copeland A."/>
            <person name="Lucas S."/>
            <person name="Lapidus A."/>
            <person name="Barry K."/>
            <person name="Detter J.C."/>
            <person name="Glavina del Rio T."/>
            <person name="Hammon N."/>
            <person name="Israni S."/>
            <person name="Dalin E."/>
            <person name="Tice H."/>
            <person name="Pitluck S."/>
            <person name="Sims D."/>
            <person name="Brettin T."/>
            <person name="Bruce D."/>
            <person name="Han C."/>
            <person name="Tapia R."/>
            <person name="Schmutz J."/>
            <person name="Larimer F."/>
            <person name="Land M."/>
            <person name="Hauser L."/>
            <person name="Kyrpides N."/>
            <person name="Kim E."/>
            <person name="Tebo B.M."/>
            <person name="Richardson P."/>
        </authorList>
    </citation>
    <scope>NUCLEOTIDE SEQUENCE [LARGE SCALE GENOMIC DNA]</scope>
    <source>
        <strain>ATCC BAA-1160 / DSM 100696 / MI-1</strain>
    </source>
</reference>
<proteinExistence type="inferred from homology"/>
<organism>
    <name type="scientific">Desulforamulus reducens (strain ATCC BAA-1160 / DSM 100696 / MI-1)</name>
    <name type="common">Desulfotomaculum reducens</name>
    <dbReference type="NCBI Taxonomy" id="349161"/>
    <lineage>
        <taxon>Bacteria</taxon>
        <taxon>Bacillati</taxon>
        <taxon>Bacillota</taxon>
        <taxon>Clostridia</taxon>
        <taxon>Eubacteriales</taxon>
        <taxon>Peptococcaceae</taxon>
        <taxon>Desulforamulus</taxon>
    </lineage>
</organism>
<keyword id="KW-1185">Reference proteome</keyword>
<keyword id="KW-0687">Ribonucleoprotein</keyword>
<keyword id="KW-0689">Ribosomal protein</keyword>
<evidence type="ECO:0000255" key="1">
    <source>
        <dbReference type="HAMAP-Rule" id="MF_00291"/>
    </source>
</evidence>
<evidence type="ECO:0000305" key="2"/>
<protein>
    <recommendedName>
        <fullName evidence="1">Small ribosomal subunit protein uS2</fullName>
    </recommendedName>
    <alternativeName>
        <fullName evidence="2">30S ribosomal protein S2</fullName>
    </alternativeName>
</protein>